<evidence type="ECO:0000255" key="1">
    <source>
        <dbReference type="HAMAP-Rule" id="MF_00181"/>
    </source>
</evidence>
<keyword id="KW-0031">Aminopeptidase</keyword>
<keyword id="KW-0963">Cytoplasm</keyword>
<keyword id="KW-0378">Hydrolase</keyword>
<keyword id="KW-0464">Manganese</keyword>
<keyword id="KW-0479">Metal-binding</keyword>
<keyword id="KW-0645">Protease</keyword>
<keyword id="KW-1185">Reference proteome</keyword>
<proteinExistence type="inferred from homology"/>
<name>AMPA_LEPIN</name>
<organism>
    <name type="scientific">Leptospira interrogans serogroup Icterohaemorrhagiae serovar Lai (strain 56601)</name>
    <dbReference type="NCBI Taxonomy" id="189518"/>
    <lineage>
        <taxon>Bacteria</taxon>
        <taxon>Pseudomonadati</taxon>
        <taxon>Spirochaetota</taxon>
        <taxon>Spirochaetia</taxon>
        <taxon>Leptospirales</taxon>
        <taxon>Leptospiraceae</taxon>
        <taxon>Leptospira</taxon>
    </lineage>
</organism>
<accession>Q8F0Q1</accession>
<gene>
    <name evidence="1" type="primary">pepA</name>
    <name type="ordered locus">LA_3441</name>
</gene>
<dbReference type="EC" id="3.4.11.1" evidence="1"/>
<dbReference type="EC" id="3.4.11.10" evidence="1"/>
<dbReference type="EMBL" id="AE010300">
    <property type="protein sequence ID" value="AAN50639.1"/>
    <property type="molecule type" value="Genomic_DNA"/>
</dbReference>
<dbReference type="RefSeq" id="NP_713621.1">
    <property type="nucleotide sequence ID" value="NC_004342.2"/>
</dbReference>
<dbReference type="RefSeq" id="WP_000762684.1">
    <property type="nucleotide sequence ID" value="NC_004342.2"/>
</dbReference>
<dbReference type="SMR" id="Q8F0Q1"/>
<dbReference type="FunCoup" id="Q8F0Q1">
    <property type="interactions" value="391"/>
</dbReference>
<dbReference type="STRING" id="189518.LA_3441"/>
<dbReference type="PaxDb" id="189518-LA_3441"/>
<dbReference type="EnsemblBacteria" id="AAN50639">
    <property type="protein sequence ID" value="AAN50639"/>
    <property type="gene ID" value="LA_3441"/>
</dbReference>
<dbReference type="KEGG" id="lil:LA_3441"/>
<dbReference type="PATRIC" id="fig|189518.3.peg.3407"/>
<dbReference type="HOGENOM" id="CLU_013734_0_1_12"/>
<dbReference type="InParanoid" id="Q8F0Q1"/>
<dbReference type="OrthoDB" id="9809354at2"/>
<dbReference type="Proteomes" id="UP000001408">
    <property type="component" value="Chromosome I"/>
</dbReference>
<dbReference type="GO" id="GO:0005737">
    <property type="term" value="C:cytoplasm"/>
    <property type="evidence" value="ECO:0000318"/>
    <property type="project" value="GO_Central"/>
</dbReference>
<dbReference type="GO" id="GO:0030145">
    <property type="term" value="F:manganese ion binding"/>
    <property type="evidence" value="ECO:0007669"/>
    <property type="project" value="UniProtKB-UniRule"/>
</dbReference>
<dbReference type="GO" id="GO:0070006">
    <property type="term" value="F:metalloaminopeptidase activity"/>
    <property type="evidence" value="ECO:0007669"/>
    <property type="project" value="InterPro"/>
</dbReference>
<dbReference type="GO" id="GO:0008233">
    <property type="term" value="F:peptidase activity"/>
    <property type="evidence" value="ECO:0000318"/>
    <property type="project" value="GO_Central"/>
</dbReference>
<dbReference type="GO" id="GO:0006508">
    <property type="term" value="P:proteolysis"/>
    <property type="evidence" value="ECO:0000318"/>
    <property type="project" value="GO_Central"/>
</dbReference>
<dbReference type="CDD" id="cd00433">
    <property type="entry name" value="Peptidase_M17"/>
    <property type="match status" value="1"/>
</dbReference>
<dbReference type="Gene3D" id="3.40.220.10">
    <property type="entry name" value="Leucine Aminopeptidase, subunit E, domain 1"/>
    <property type="match status" value="1"/>
</dbReference>
<dbReference type="Gene3D" id="3.40.630.10">
    <property type="entry name" value="Zn peptidases"/>
    <property type="match status" value="1"/>
</dbReference>
<dbReference type="HAMAP" id="MF_00181">
    <property type="entry name" value="Cytosol_peptidase_M17"/>
    <property type="match status" value="1"/>
</dbReference>
<dbReference type="InterPro" id="IPR011356">
    <property type="entry name" value="Leucine_aapep/pepB"/>
</dbReference>
<dbReference type="InterPro" id="IPR043472">
    <property type="entry name" value="Macro_dom-like"/>
</dbReference>
<dbReference type="InterPro" id="IPR000819">
    <property type="entry name" value="Peptidase_M17_C"/>
</dbReference>
<dbReference type="InterPro" id="IPR023042">
    <property type="entry name" value="Peptidase_M17_leu_NH2_pept"/>
</dbReference>
<dbReference type="PANTHER" id="PTHR11963:SF23">
    <property type="entry name" value="CYTOSOL AMINOPEPTIDASE"/>
    <property type="match status" value="1"/>
</dbReference>
<dbReference type="PANTHER" id="PTHR11963">
    <property type="entry name" value="LEUCINE AMINOPEPTIDASE-RELATED"/>
    <property type="match status" value="1"/>
</dbReference>
<dbReference type="Pfam" id="PF00883">
    <property type="entry name" value="Peptidase_M17"/>
    <property type="match status" value="1"/>
</dbReference>
<dbReference type="PRINTS" id="PR00481">
    <property type="entry name" value="LAMNOPPTDASE"/>
</dbReference>
<dbReference type="SUPFAM" id="SSF52949">
    <property type="entry name" value="Macro domain-like"/>
    <property type="match status" value="1"/>
</dbReference>
<dbReference type="SUPFAM" id="SSF53187">
    <property type="entry name" value="Zn-dependent exopeptidases"/>
    <property type="match status" value="1"/>
</dbReference>
<dbReference type="PROSITE" id="PS00631">
    <property type="entry name" value="CYTOSOL_AP"/>
    <property type="match status" value="1"/>
</dbReference>
<reference key="1">
    <citation type="journal article" date="2003" name="Nature">
        <title>Unique physiological and pathogenic features of Leptospira interrogans revealed by whole-genome sequencing.</title>
        <authorList>
            <person name="Ren S.-X."/>
            <person name="Fu G."/>
            <person name="Jiang X.-G."/>
            <person name="Zeng R."/>
            <person name="Miao Y.-G."/>
            <person name="Xu H."/>
            <person name="Zhang Y.-X."/>
            <person name="Xiong H."/>
            <person name="Lu G."/>
            <person name="Lu L.-F."/>
            <person name="Jiang H.-Q."/>
            <person name="Jia J."/>
            <person name="Tu Y.-F."/>
            <person name="Jiang J.-X."/>
            <person name="Gu W.-Y."/>
            <person name="Zhang Y.-Q."/>
            <person name="Cai Z."/>
            <person name="Sheng H.-H."/>
            <person name="Yin H.-F."/>
            <person name="Zhang Y."/>
            <person name="Zhu G.-F."/>
            <person name="Wan M."/>
            <person name="Huang H.-L."/>
            <person name="Qian Z."/>
            <person name="Wang S.-Y."/>
            <person name="Ma W."/>
            <person name="Yao Z.-J."/>
            <person name="Shen Y."/>
            <person name="Qiang B.-Q."/>
            <person name="Xia Q.-C."/>
            <person name="Guo X.-K."/>
            <person name="Danchin A."/>
            <person name="Saint Girons I."/>
            <person name="Somerville R.L."/>
            <person name="Wen Y.-M."/>
            <person name="Shi M.-H."/>
            <person name="Chen Z."/>
            <person name="Xu J.-G."/>
            <person name="Zhao G.-P."/>
        </authorList>
    </citation>
    <scope>NUCLEOTIDE SEQUENCE [LARGE SCALE GENOMIC DNA]</scope>
    <source>
        <strain>56601</strain>
    </source>
</reference>
<comment type="function">
    <text evidence="1">Presumably involved in the processing and regular turnover of intracellular proteins. Catalyzes the removal of unsubstituted N-terminal amino acids from various peptides.</text>
</comment>
<comment type="catalytic activity">
    <reaction evidence="1">
        <text>Release of an N-terminal amino acid, Xaa-|-Yaa-, in which Xaa is preferably Leu, but may be other amino acids including Pro although not Arg or Lys, and Yaa may be Pro. Amino acid amides and methyl esters are also readily hydrolyzed, but rates on arylamides are exceedingly low.</text>
        <dbReference type="EC" id="3.4.11.1"/>
    </reaction>
</comment>
<comment type="catalytic activity">
    <reaction evidence="1">
        <text>Release of an N-terminal amino acid, preferentially leucine, but not glutamic or aspartic acids.</text>
        <dbReference type="EC" id="3.4.11.10"/>
    </reaction>
</comment>
<comment type="cofactor">
    <cofactor evidence="1">
        <name>Mn(2+)</name>
        <dbReference type="ChEBI" id="CHEBI:29035"/>
    </cofactor>
    <text evidence="1">Binds 2 manganese ions per subunit.</text>
</comment>
<comment type="subcellular location">
    <subcellularLocation>
        <location evidence="1">Cytoplasm</location>
    </subcellularLocation>
</comment>
<comment type="similarity">
    <text evidence="1">Belongs to the peptidase M17 family.</text>
</comment>
<feature type="chain" id="PRO_0000165764" description="Probable cytosol aminopeptidase">
    <location>
        <begin position="1"/>
        <end position="495"/>
    </location>
</feature>
<feature type="active site" evidence="1">
    <location>
        <position position="270"/>
    </location>
</feature>
<feature type="active site" evidence="1">
    <location>
        <position position="344"/>
    </location>
</feature>
<feature type="binding site" evidence="1">
    <location>
        <position position="258"/>
    </location>
    <ligand>
        <name>Mn(2+)</name>
        <dbReference type="ChEBI" id="CHEBI:29035"/>
        <label>2</label>
    </ligand>
</feature>
<feature type="binding site" evidence="1">
    <location>
        <position position="263"/>
    </location>
    <ligand>
        <name>Mn(2+)</name>
        <dbReference type="ChEBI" id="CHEBI:29035"/>
        <label>1</label>
    </ligand>
</feature>
<feature type="binding site" evidence="1">
    <location>
        <position position="263"/>
    </location>
    <ligand>
        <name>Mn(2+)</name>
        <dbReference type="ChEBI" id="CHEBI:29035"/>
        <label>2</label>
    </ligand>
</feature>
<feature type="binding site" evidence="1">
    <location>
        <position position="281"/>
    </location>
    <ligand>
        <name>Mn(2+)</name>
        <dbReference type="ChEBI" id="CHEBI:29035"/>
        <label>2</label>
    </ligand>
</feature>
<feature type="binding site" evidence="1">
    <location>
        <position position="340"/>
    </location>
    <ligand>
        <name>Mn(2+)</name>
        <dbReference type="ChEBI" id="CHEBI:29035"/>
        <label>1</label>
    </ligand>
</feature>
<feature type="binding site" evidence="1">
    <location>
        <position position="342"/>
    </location>
    <ligand>
        <name>Mn(2+)</name>
        <dbReference type="ChEBI" id="CHEBI:29035"/>
        <label>1</label>
    </ligand>
</feature>
<feature type="binding site" evidence="1">
    <location>
        <position position="342"/>
    </location>
    <ligand>
        <name>Mn(2+)</name>
        <dbReference type="ChEBI" id="CHEBI:29035"/>
        <label>2</label>
    </ligand>
</feature>
<sequence>MKLDKNKIQISIGKNPSKTFYKLQLLLKDHFPENLKTKFSFQTASGIFTGENGQIFTDEVEKIIYLGLGETSKIKIRGVAQHFFQFGEKLKKWEGVGLEIHLPKVLTNSLSADLVVYQIVNSLEQGVYAINVLAKEYKENSKKIGNVSFILQDAAKLKEAEKGLKRGKIVSRYINGVRHIAHLPANHFTPEEFVSRSKEIAKDNGLKITVFDEPQLKKEKMGGILSVCEGSDKKAKMILLEYTPVKPITKKKLAIIGKGLTFDSGGISIKPAQDMHEMKYDMCGAATAIHAIGAIAELGLGVPVIAAIGVAENMPDAAAIKPGDVYTAYNGITVEVQNTDAEGRLVLGDVLSYVGKKFKPDYMLDLATLTGAIIISLGHEAAGVMSNSDVLTNLLKEASISSDERIWEMPLWEEYSEDLKSDIADIRNVAGRAGGSLSAAKFLERFVEPGIAWAHIDIAGTAWRKKTSGTQIGNGPTGYGVRLLVDLVEKIGKKK</sequence>
<protein>
    <recommendedName>
        <fullName evidence="1">Probable cytosol aminopeptidase</fullName>
        <ecNumber evidence="1">3.4.11.1</ecNumber>
    </recommendedName>
    <alternativeName>
        <fullName evidence="1">Leucine aminopeptidase</fullName>
        <shortName evidence="1">LAP</shortName>
        <ecNumber evidence="1">3.4.11.10</ecNumber>
    </alternativeName>
    <alternativeName>
        <fullName evidence="1">Leucyl aminopeptidase</fullName>
    </alternativeName>
</protein>